<accession>A1W0I8</accession>
<protein>
    <recommendedName>
        <fullName evidence="1">ATP synthase subunit a</fullName>
    </recommendedName>
    <alternativeName>
        <fullName evidence="1">ATP synthase F0 sector subunit a</fullName>
    </alternativeName>
    <alternativeName>
        <fullName evidence="1">F-ATPase subunit 6</fullName>
    </alternativeName>
</protein>
<organism>
    <name type="scientific">Campylobacter jejuni subsp. jejuni serotype O:23/36 (strain 81-176)</name>
    <dbReference type="NCBI Taxonomy" id="354242"/>
    <lineage>
        <taxon>Bacteria</taxon>
        <taxon>Pseudomonadati</taxon>
        <taxon>Campylobacterota</taxon>
        <taxon>Epsilonproteobacteria</taxon>
        <taxon>Campylobacterales</taxon>
        <taxon>Campylobacteraceae</taxon>
        <taxon>Campylobacter</taxon>
    </lineage>
</organism>
<comment type="function">
    <text evidence="1">Key component of the proton channel; it plays a direct role in the translocation of protons across the membrane.</text>
</comment>
<comment type="subunit">
    <text evidence="1">F-type ATPases have 2 components, CF(1) - the catalytic core - and CF(0) - the membrane proton channel. CF(1) has five subunits: alpha(3), beta(3), gamma(1), delta(1), epsilon(1). CF(0) has three main subunits: a(1), b(2) and c(9-12). The alpha and beta chains form an alternating ring which encloses part of the gamma chain. CF(1) is attached to CF(0) by a central stalk formed by the gamma and epsilon chains, while a peripheral stalk is formed by the delta and b chains.</text>
</comment>
<comment type="subcellular location">
    <subcellularLocation>
        <location evidence="1">Cell inner membrane</location>
        <topology evidence="1">Multi-pass membrane protein</topology>
    </subcellularLocation>
</comment>
<comment type="similarity">
    <text evidence="1">Belongs to the ATPase A chain family.</text>
</comment>
<keyword id="KW-0066">ATP synthesis</keyword>
<keyword id="KW-0997">Cell inner membrane</keyword>
<keyword id="KW-1003">Cell membrane</keyword>
<keyword id="KW-0138">CF(0)</keyword>
<keyword id="KW-0375">Hydrogen ion transport</keyword>
<keyword id="KW-0406">Ion transport</keyword>
<keyword id="KW-0472">Membrane</keyword>
<keyword id="KW-0812">Transmembrane</keyword>
<keyword id="KW-1133">Transmembrane helix</keyword>
<keyword id="KW-0813">Transport</keyword>
<evidence type="ECO:0000255" key="1">
    <source>
        <dbReference type="HAMAP-Rule" id="MF_01393"/>
    </source>
</evidence>
<name>ATP6_CAMJJ</name>
<sequence length="226" mass="25029">MKDLFLFSSLLDASHTFSYFFHIGLVALIAVIVAMMATRSMQLVPRGMQNLGEAFLEGVLSMGRDTMGSEKGARKYLPLVATLGIIVFFSNIIGIIPGFHSPTASLNLTLSLAIIVFVYYHFEGIRAQGFVKYFAHFMGPIKLLAPLMFPIEIVSHLSRVVSLSFRLFGNIKGDDLFLMVILALVPYIAPLPAYVLLTFMAFLQAFIFMILTYVYLAGATVVEEGH</sequence>
<dbReference type="EMBL" id="CP000538">
    <property type="protein sequence ID" value="EAQ72245.1"/>
    <property type="molecule type" value="Genomic_DNA"/>
</dbReference>
<dbReference type="RefSeq" id="WP_002852750.1">
    <property type="nucleotide sequence ID" value="NC_008787.1"/>
</dbReference>
<dbReference type="SMR" id="A1W0I8"/>
<dbReference type="KEGG" id="cjj:CJJ81176_1219"/>
<dbReference type="eggNOG" id="COG0356">
    <property type="taxonomic scope" value="Bacteria"/>
</dbReference>
<dbReference type="HOGENOM" id="CLU_041018_2_2_7"/>
<dbReference type="Proteomes" id="UP000000646">
    <property type="component" value="Chromosome"/>
</dbReference>
<dbReference type="GO" id="GO:0005886">
    <property type="term" value="C:plasma membrane"/>
    <property type="evidence" value="ECO:0007669"/>
    <property type="project" value="UniProtKB-SubCell"/>
</dbReference>
<dbReference type="GO" id="GO:0045259">
    <property type="term" value="C:proton-transporting ATP synthase complex"/>
    <property type="evidence" value="ECO:0007669"/>
    <property type="project" value="UniProtKB-KW"/>
</dbReference>
<dbReference type="GO" id="GO:0046933">
    <property type="term" value="F:proton-transporting ATP synthase activity, rotational mechanism"/>
    <property type="evidence" value="ECO:0007669"/>
    <property type="project" value="UniProtKB-UniRule"/>
</dbReference>
<dbReference type="GO" id="GO:0042777">
    <property type="term" value="P:proton motive force-driven plasma membrane ATP synthesis"/>
    <property type="evidence" value="ECO:0007669"/>
    <property type="project" value="TreeGrafter"/>
</dbReference>
<dbReference type="CDD" id="cd00310">
    <property type="entry name" value="ATP-synt_Fo_a_6"/>
    <property type="match status" value="1"/>
</dbReference>
<dbReference type="FunFam" id="1.20.120.220:FF:000006">
    <property type="entry name" value="ATP synthase subunit a"/>
    <property type="match status" value="1"/>
</dbReference>
<dbReference type="Gene3D" id="1.20.120.220">
    <property type="entry name" value="ATP synthase, F0 complex, subunit A"/>
    <property type="match status" value="1"/>
</dbReference>
<dbReference type="HAMAP" id="MF_01393">
    <property type="entry name" value="ATP_synth_a_bact"/>
    <property type="match status" value="1"/>
</dbReference>
<dbReference type="InterPro" id="IPR045082">
    <property type="entry name" value="ATP_syn_F0_a_bact/chloroplast"/>
</dbReference>
<dbReference type="InterPro" id="IPR000568">
    <property type="entry name" value="ATP_synth_F0_asu"/>
</dbReference>
<dbReference type="InterPro" id="IPR023011">
    <property type="entry name" value="ATP_synth_F0_asu_AS"/>
</dbReference>
<dbReference type="InterPro" id="IPR035908">
    <property type="entry name" value="F0_ATP_A_sf"/>
</dbReference>
<dbReference type="NCBIfam" id="TIGR01131">
    <property type="entry name" value="ATP_synt_6_or_A"/>
    <property type="match status" value="1"/>
</dbReference>
<dbReference type="NCBIfam" id="NF004481">
    <property type="entry name" value="PRK05815.2-3"/>
    <property type="match status" value="1"/>
</dbReference>
<dbReference type="PANTHER" id="PTHR42823">
    <property type="entry name" value="ATP SYNTHASE SUBUNIT A, CHLOROPLASTIC"/>
    <property type="match status" value="1"/>
</dbReference>
<dbReference type="PANTHER" id="PTHR42823:SF3">
    <property type="entry name" value="ATP SYNTHASE SUBUNIT A, CHLOROPLASTIC"/>
    <property type="match status" value="1"/>
</dbReference>
<dbReference type="Pfam" id="PF00119">
    <property type="entry name" value="ATP-synt_A"/>
    <property type="match status" value="1"/>
</dbReference>
<dbReference type="PRINTS" id="PR00123">
    <property type="entry name" value="ATPASEA"/>
</dbReference>
<dbReference type="SUPFAM" id="SSF81336">
    <property type="entry name" value="F1F0 ATP synthase subunit A"/>
    <property type="match status" value="1"/>
</dbReference>
<dbReference type="PROSITE" id="PS00449">
    <property type="entry name" value="ATPASE_A"/>
    <property type="match status" value="1"/>
</dbReference>
<proteinExistence type="inferred from homology"/>
<feature type="chain" id="PRO_0000362267" description="ATP synthase subunit a">
    <location>
        <begin position="1"/>
        <end position="226"/>
    </location>
</feature>
<feature type="transmembrane region" description="Helical" evidence="1">
    <location>
        <begin position="17"/>
        <end position="37"/>
    </location>
</feature>
<feature type="transmembrane region" description="Helical" evidence="1">
    <location>
        <begin position="79"/>
        <end position="99"/>
    </location>
</feature>
<feature type="transmembrane region" description="Helical" evidence="1">
    <location>
        <begin position="105"/>
        <end position="125"/>
    </location>
</feature>
<feature type="transmembrane region" description="Helical" evidence="1">
    <location>
        <begin position="134"/>
        <end position="154"/>
    </location>
</feature>
<feature type="transmembrane region" description="Helical" evidence="1">
    <location>
        <begin position="176"/>
        <end position="196"/>
    </location>
</feature>
<feature type="transmembrane region" description="Helical" evidence="1">
    <location>
        <begin position="199"/>
        <end position="219"/>
    </location>
</feature>
<gene>
    <name evidence="1" type="primary">atpB</name>
    <name type="ordered locus">CJJ81176_1219</name>
</gene>
<reference key="1">
    <citation type="submission" date="2006-12" db="EMBL/GenBank/DDBJ databases">
        <authorList>
            <person name="Fouts D.E."/>
            <person name="Nelson K.E."/>
            <person name="Sebastian Y."/>
        </authorList>
    </citation>
    <scope>NUCLEOTIDE SEQUENCE [LARGE SCALE GENOMIC DNA]</scope>
    <source>
        <strain>81-176</strain>
    </source>
</reference>